<evidence type="ECO:0000250" key="1"/>
<evidence type="ECO:0000255" key="2">
    <source>
        <dbReference type="HAMAP-Rule" id="MF_03125"/>
    </source>
</evidence>
<evidence type="ECO:0000269" key="3">
    <source>
    </source>
</evidence>
<evidence type="ECO:0000305" key="4"/>
<evidence type="ECO:0000312" key="5">
    <source>
        <dbReference type="FlyBase" id="FBgn0027493"/>
    </source>
</evidence>
<name>PURA_DROME</name>
<dbReference type="EC" id="6.3.4.4" evidence="2"/>
<dbReference type="EMBL" id="AE014297">
    <property type="protein sequence ID" value="AAF55811.1"/>
    <property type="molecule type" value="Genomic_DNA"/>
</dbReference>
<dbReference type="EMBL" id="AF145694">
    <property type="protein sequence ID" value="AAD38669.1"/>
    <property type="molecule type" value="mRNA"/>
</dbReference>
<dbReference type="EMBL" id="AY113428">
    <property type="protein sequence ID" value="AAM29433.1"/>
    <property type="molecule type" value="mRNA"/>
</dbReference>
<dbReference type="RefSeq" id="NP_650918.1">
    <property type="nucleotide sequence ID" value="NM_142661.3"/>
</dbReference>
<dbReference type="SMR" id="Q9Y0Y2"/>
<dbReference type="BioGRID" id="67439">
    <property type="interactions" value="6"/>
</dbReference>
<dbReference type="FunCoup" id="Q9Y0Y2">
    <property type="interactions" value="1517"/>
</dbReference>
<dbReference type="IntAct" id="Q9Y0Y2">
    <property type="interactions" value="98"/>
</dbReference>
<dbReference type="STRING" id="7227.FBpp0083395"/>
<dbReference type="PaxDb" id="7227-FBpp0302642"/>
<dbReference type="PeptideAtlas" id="Q9Y0Y2"/>
<dbReference type="DNASU" id="42466"/>
<dbReference type="EnsemblMetazoa" id="FBtr0083991">
    <property type="protein sequence ID" value="FBpp0083395"/>
    <property type="gene ID" value="FBgn0027493"/>
</dbReference>
<dbReference type="GeneID" id="42466"/>
<dbReference type="KEGG" id="dme:Dmel_CG17273"/>
<dbReference type="UCSC" id="CG17273-RA">
    <property type="organism name" value="d. melanogaster"/>
</dbReference>
<dbReference type="AGR" id="FB:FBgn0027493"/>
<dbReference type="CTD" id="42466"/>
<dbReference type="FlyBase" id="FBgn0027493">
    <property type="gene designation" value="Adss"/>
</dbReference>
<dbReference type="VEuPathDB" id="VectorBase:FBgn0027493"/>
<dbReference type="eggNOG" id="KOG1355">
    <property type="taxonomic scope" value="Eukaryota"/>
</dbReference>
<dbReference type="GeneTree" id="ENSGT00390000015553"/>
<dbReference type="HOGENOM" id="CLU_029848_3_0_1"/>
<dbReference type="InParanoid" id="Q9Y0Y2"/>
<dbReference type="OrthoDB" id="10265645at2759"/>
<dbReference type="PhylomeDB" id="Q9Y0Y2"/>
<dbReference type="Reactome" id="R-DME-73817">
    <property type="pathway name" value="Purine ribonucleoside monophosphate biosynthesis"/>
</dbReference>
<dbReference type="UniPathway" id="UPA00075">
    <property type="reaction ID" value="UER00335"/>
</dbReference>
<dbReference type="BioGRID-ORCS" id="42466">
    <property type="hits" value="1 hit in 3 CRISPR screens"/>
</dbReference>
<dbReference type="ChiTaRS" id="AdSS">
    <property type="organism name" value="fly"/>
</dbReference>
<dbReference type="GenomeRNAi" id="42466"/>
<dbReference type="PRO" id="PR:Q9Y0Y2"/>
<dbReference type="Proteomes" id="UP000000803">
    <property type="component" value="Chromosome 3R"/>
</dbReference>
<dbReference type="Bgee" id="FBgn0027493">
    <property type="expression patterns" value="Expressed in adult Malpighian tubule (Drosophila) and 238 other cell types or tissues"/>
</dbReference>
<dbReference type="ExpressionAtlas" id="Q9Y0Y2">
    <property type="expression patterns" value="baseline and differential"/>
</dbReference>
<dbReference type="GO" id="GO:0005737">
    <property type="term" value="C:cytoplasm"/>
    <property type="evidence" value="ECO:0000318"/>
    <property type="project" value="GO_Central"/>
</dbReference>
<dbReference type="GO" id="GO:0004019">
    <property type="term" value="F:adenylosuccinate synthase activity"/>
    <property type="evidence" value="ECO:0000318"/>
    <property type="project" value="GO_Central"/>
</dbReference>
<dbReference type="GO" id="GO:0005525">
    <property type="term" value="F:GTP binding"/>
    <property type="evidence" value="ECO:0007669"/>
    <property type="project" value="UniProtKB-UniRule"/>
</dbReference>
<dbReference type="GO" id="GO:0000287">
    <property type="term" value="F:magnesium ion binding"/>
    <property type="evidence" value="ECO:0007669"/>
    <property type="project" value="UniProtKB-UniRule"/>
</dbReference>
<dbReference type="GO" id="GO:0044208">
    <property type="term" value="P:'de novo' AMP biosynthetic process"/>
    <property type="evidence" value="ECO:0000318"/>
    <property type="project" value="GO_Central"/>
</dbReference>
<dbReference type="GO" id="GO:0046040">
    <property type="term" value="P:IMP metabolic process"/>
    <property type="evidence" value="ECO:0000318"/>
    <property type="project" value="GO_Central"/>
</dbReference>
<dbReference type="CDD" id="cd03108">
    <property type="entry name" value="AdSS"/>
    <property type="match status" value="1"/>
</dbReference>
<dbReference type="FunFam" id="3.90.170.10:FF:000001">
    <property type="entry name" value="Adenylosuccinate synthetase"/>
    <property type="match status" value="1"/>
</dbReference>
<dbReference type="FunFam" id="1.10.300.10:FF:000002">
    <property type="entry name" value="Adenylosuccinate synthetase, chloroplastic"/>
    <property type="match status" value="1"/>
</dbReference>
<dbReference type="Gene3D" id="3.40.440.10">
    <property type="entry name" value="Adenylosuccinate Synthetase, subunit A, domain 1"/>
    <property type="match status" value="1"/>
</dbReference>
<dbReference type="Gene3D" id="1.10.300.10">
    <property type="entry name" value="Adenylosuccinate Synthetase, subunit A, domain 2"/>
    <property type="match status" value="1"/>
</dbReference>
<dbReference type="Gene3D" id="3.90.170.10">
    <property type="entry name" value="Adenylosuccinate Synthetase, subunit A, domain 3"/>
    <property type="match status" value="1"/>
</dbReference>
<dbReference type="HAMAP" id="MF_00011">
    <property type="entry name" value="Adenylosucc_synth"/>
    <property type="match status" value="1"/>
</dbReference>
<dbReference type="InterPro" id="IPR018220">
    <property type="entry name" value="Adenylosuccin_syn_GTP-bd"/>
</dbReference>
<dbReference type="InterPro" id="IPR033128">
    <property type="entry name" value="Adenylosuccin_syn_Lys_AS"/>
</dbReference>
<dbReference type="InterPro" id="IPR042109">
    <property type="entry name" value="Adenylosuccinate_synth_dom1"/>
</dbReference>
<dbReference type="InterPro" id="IPR042110">
    <property type="entry name" value="Adenylosuccinate_synth_dom2"/>
</dbReference>
<dbReference type="InterPro" id="IPR042111">
    <property type="entry name" value="Adenylosuccinate_synth_dom3"/>
</dbReference>
<dbReference type="InterPro" id="IPR001114">
    <property type="entry name" value="Adenylosuccinate_synthetase"/>
</dbReference>
<dbReference type="InterPro" id="IPR027417">
    <property type="entry name" value="P-loop_NTPase"/>
</dbReference>
<dbReference type="NCBIfam" id="NF002223">
    <property type="entry name" value="PRK01117.1"/>
    <property type="match status" value="1"/>
</dbReference>
<dbReference type="NCBIfam" id="TIGR00184">
    <property type="entry name" value="purA"/>
    <property type="match status" value="1"/>
</dbReference>
<dbReference type="PANTHER" id="PTHR11846">
    <property type="entry name" value="ADENYLOSUCCINATE SYNTHETASE"/>
    <property type="match status" value="1"/>
</dbReference>
<dbReference type="PANTHER" id="PTHR11846:SF0">
    <property type="entry name" value="ADENYLOSUCCINATE SYNTHETASE"/>
    <property type="match status" value="1"/>
</dbReference>
<dbReference type="Pfam" id="PF00709">
    <property type="entry name" value="Adenylsucc_synt"/>
    <property type="match status" value="1"/>
</dbReference>
<dbReference type="SMART" id="SM00788">
    <property type="entry name" value="Adenylsucc_synt"/>
    <property type="match status" value="1"/>
</dbReference>
<dbReference type="SUPFAM" id="SSF52540">
    <property type="entry name" value="P-loop containing nucleoside triphosphate hydrolases"/>
    <property type="match status" value="1"/>
</dbReference>
<dbReference type="PROSITE" id="PS01266">
    <property type="entry name" value="ADENYLOSUCCIN_SYN_1"/>
    <property type="match status" value="1"/>
</dbReference>
<dbReference type="PROSITE" id="PS00513">
    <property type="entry name" value="ADENYLOSUCCIN_SYN_2"/>
    <property type="match status" value="1"/>
</dbReference>
<keyword id="KW-0963">Cytoplasm</keyword>
<keyword id="KW-0342">GTP-binding</keyword>
<keyword id="KW-0436">Ligase</keyword>
<keyword id="KW-0460">Magnesium</keyword>
<keyword id="KW-0479">Metal-binding</keyword>
<keyword id="KW-0547">Nucleotide-binding</keyword>
<keyword id="KW-0658">Purine biosynthesis</keyword>
<keyword id="KW-1185">Reference proteome</keyword>
<accession>Q9Y0Y2</accession>
<accession>Q8MZ11</accession>
<accession>Q9VDI2</accession>
<feature type="chain" id="PRO_0000095136" description="Adenylosuccinate synthetase">
    <location>
        <begin position="1"/>
        <end position="447"/>
    </location>
</feature>
<feature type="active site" description="Proton acceptor" evidence="2">
    <location>
        <position position="36"/>
    </location>
</feature>
<feature type="active site" description="Proton donor" evidence="2">
    <location>
        <position position="64"/>
    </location>
</feature>
<feature type="binding site" evidence="2">
    <location>
        <begin position="35"/>
        <end position="41"/>
    </location>
    <ligand>
        <name>GTP</name>
        <dbReference type="ChEBI" id="CHEBI:37565"/>
    </ligand>
</feature>
<feature type="binding site" description="in other chain" evidence="2">
    <location>
        <begin position="36"/>
        <end position="39"/>
    </location>
    <ligand>
        <name>IMP</name>
        <dbReference type="ChEBI" id="CHEBI:58053"/>
        <note>ligand shared between dimeric partners</note>
    </ligand>
</feature>
<feature type="binding site" evidence="2">
    <location>
        <position position="36"/>
    </location>
    <ligand>
        <name>Mg(2+)</name>
        <dbReference type="ChEBI" id="CHEBI:18420"/>
    </ligand>
</feature>
<feature type="binding site" description="in other chain" evidence="2">
    <location>
        <begin position="61"/>
        <end position="64"/>
    </location>
    <ligand>
        <name>IMP</name>
        <dbReference type="ChEBI" id="CHEBI:58053"/>
        <note>ligand shared between dimeric partners</note>
    </ligand>
</feature>
<feature type="binding site" evidence="2">
    <location>
        <begin position="63"/>
        <end position="65"/>
    </location>
    <ligand>
        <name>GTP</name>
        <dbReference type="ChEBI" id="CHEBI:37565"/>
    </ligand>
</feature>
<feature type="binding site" evidence="2">
    <location>
        <position position="63"/>
    </location>
    <ligand>
        <name>Mg(2+)</name>
        <dbReference type="ChEBI" id="CHEBI:18420"/>
    </ligand>
</feature>
<feature type="binding site" description="in other chain" evidence="2">
    <location>
        <position position="153"/>
    </location>
    <ligand>
        <name>IMP</name>
        <dbReference type="ChEBI" id="CHEBI:58053"/>
        <note>ligand shared between dimeric partners</note>
    </ligand>
</feature>
<feature type="binding site" evidence="2">
    <location>
        <position position="167"/>
    </location>
    <ligand>
        <name>IMP</name>
        <dbReference type="ChEBI" id="CHEBI:58053"/>
        <note>ligand shared between dimeric partners</note>
    </ligand>
</feature>
<feature type="binding site" description="in other chain" evidence="2">
    <location>
        <position position="245"/>
    </location>
    <ligand>
        <name>IMP</name>
        <dbReference type="ChEBI" id="CHEBI:58053"/>
        <note>ligand shared between dimeric partners</note>
    </ligand>
</feature>
<feature type="binding site" description="in other chain" evidence="2">
    <location>
        <position position="260"/>
    </location>
    <ligand>
        <name>IMP</name>
        <dbReference type="ChEBI" id="CHEBI:58053"/>
        <note>ligand shared between dimeric partners</note>
    </ligand>
</feature>
<feature type="binding site" evidence="2">
    <location>
        <begin position="320"/>
        <end position="326"/>
    </location>
    <ligand>
        <name>substrate</name>
    </ligand>
</feature>
<feature type="binding site" description="in other chain" evidence="2">
    <location>
        <position position="324"/>
    </location>
    <ligand>
        <name>IMP</name>
        <dbReference type="ChEBI" id="CHEBI:58053"/>
        <note>ligand shared between dimeric partners</note>
    </ligand>
</feature>
<feature type="binding site" evidence="2">
    <location>
        <position position="326"/>
    </location>
    <ligand>
        <name>GTP</name>
        <dbReference type="ChEBI" id="CHEBI:37565"/>
    </ligand>
</feature>
<feature type="binding site" evidence="2">
    <location>
        <begin position="352"/>
        <end position="354"/>
    </location>
    <ligand>
        <name>GTP</name>
        <dbReference type="ChEBI" id="CHEBI:37565"/>
    </ligand>
</feature>
<feature type="binding site" evidence="2">
    <location>
        <begin position="435"/>
        <end position="437"/>
    </location>
    <ligand>
        <name>GTP</name>
        <dbReference type="ChEBI" id="CHEBI:37565"/>
    </ligand>
</feature>
<feature type="sequence conflict" description="In Ref. 4; AAF55811/AAM29433." evidence="4" ref="4">
    <original>L</original>
    <variation>F</variation>
    <location>
        <position position="422"/>
    </location>
</feature>
<comment type="function">
    <text evidence="1 3">Plays an important role in the de novo pathway and in the salvage pathway of purine nucleotide biosynthesis. Catalyzes the first committed step in the biosynthesis of AMP from IMP (By similarity). Plays a role in the regulation of adult life span.</text>
</comment>
<comment type="catalytic activity">
    <reaction evidence="2">
        <text>IMP + L-aspartate + GTP = N(6)-(1,2-dicarboxyethyl)-AMP + GDP + phosphate + 2 H(+)</text>
        <dbReference type="Rhea" id="RHEA:15753"/>
        <dbReference type="ChEBI" id="CHEBI:15378"/>
        <dbReference type="ChEBI" id="CHEBI:29991"/>
        <dbReference type="ChEBI" id="CHEBI:37565"/>
        <dbReference type="ChEBI" id="CHEBI:43474"/>
        <dbReference type="ChEBI" id="CHEBI:57567"/>
        <dbReference type="ChEBI" id="CHEBI:58053"/>
        <dbReference type="ChEBI" id="CHEBI:58189"/>
        <dbReference type="EC" id="6.3.4.4"/>
    </reaction>
</comment>
<comment type="cofactor">
    <cofactor evidence="2">
        <name>Mg(2+)</name>
        <dbReference type="ChEBI" id="CHEBI:18420"/>
    </cofactor>
    <text evidence="2">Binds 1 Mg(2+) ion per subunit.</text>
</comment>
<comment type="pathway">
    <text evidence="2">Purine metabolism; AMP biosynthesis via de novo pathway; AMP from IMP: step 1/2.</text>
</comment>
<comment type="subunit">
    <text evidence="2">Homodimer.</text>
</comment>
<comment type="subcellular location">
    <subcellularLocation>
        <location evidence="2">Cytoplasm</location>
    </subcellularLocation>
</comment>
<comment type="disruption phenotype">
    <text evidence="3">Mutant flies show life span extension and increased activity. Heterozygous mutants show increased ratios of AMP:ATP (3 to 4-fold) and ADP:ATP (2-fold), also observed in response to caloric restriction, and associated with life span extension phenotypes in yeast and worms.</text>
</comment>
<comment type="similarity">
    <text evidence="2">Belongs to the adenylosuccinate synthetase family.</text>
</comment>
<proteinExistence type="evidence at transcript level"/>
<sequence>MSASATNGTHYEQLHQGRTKMYKSKVDVVLGAQWGDEGKGKVVDMLASDVDIVCRCQGGNNAGHTVVANGTEFDFHLLPSGVVNEKCVSVIGNGVVIHLPSLFDEVLKNEAKGLQHLENRLIISDRAHLVFDFHQHVDGMQEAEKGGKSLGTTKKGIGPAYSSKATRNGIRVGELLGDFNLFSEKFKSIVATHVRLFPSINVDVEAELARYKDYADKVRPYVKDTICFLHTALRNGKTILVEGANAAMLDIDFGTYPYVTSSNCSIGGVLTGLGLPPQTIGEVIGVVKAYTTRVGDGPFPTEQLNDIGDLLQTRGFEVGVTTKRKRRCGWLDIPLLKYTSLVNGYTCICLTKLDILDTLPEIKVAVAYKKPNGEKLDHFPGTIAELGNIEVEYAVLPGWQTSTEEVRNFKELPENAQSYVRLLESELSVPVRWVGVGKGRESIINVH</sequence>
<gene>
    <name evidence="5" type="primary">Adss</name>
    <name evidence="5" type="ORF">CG17273</name>
</gene>
<protein>
    <recommendedName>
        <fullName evidence="2">Adenylosuccinate synthetase</fullName>
        <shortName evidence="2">AMPSase</shortName>
        <shortName evidence="2">AdSS</shortName>
        <ecNumber evidence="2">6.3.4.4</ecNumber>
    </recommendedName>
    <alternativeName>
        <fullName evidence="2">IMP--aspartate ligase</fullName>
    </alternativeName>
</protein>
<reference key="1">
    <citation type="journal article" date="2000" name="Science">
        <title>The genome sequence of Drosophila melanogaster.</title>
        <authorList>
            <person name="Adams M.D."/>
            <person name="Celniker S.E."/>
            <person name="Holt R.A."/>
            <person name="Evans C.A."/>
            <person name="Gocayne J.D."/>
            <person name="Amanatides P.G."/>
            <person name="Scherer S.E."/>
            <person name="Li P.W."/>
            <person name="Hoskins R.A."/>
            <person name="Galle R.F."/>
            <person name="George R.A."/>
            <person name="Lewis S.E."/>
            <person name="Richards S."/>
            <person name="Ashburner M."/>
            <person name="Henderson S.N."/>
            <person name="Sutton G.G."/>
            <person name="Wortman J.R."/>
            <person name="Yandell M.D."/>
            <person name="Zhang Q."/>
            <person name="Chen L.X."/>
            <person name="Brandon R.C."/>
            <person name="Rogers Y.-H.C."/>
            <person name="Blazej R.G."/>
            <person name="Champe M."/>
            <person name="Pfeiffer B.D."/>
            <person name="Wan K.H."/>
            <person name="Doyle C."/>
            <person name="Baxter E.G."/>
            <person name="Helt G."/>
            <person name="Nelson C.R."/>
            <person name="Miklos G.L.G."/>
            <person name="Abril J.F."/>
            <person name="Agbayani A."/>
            <person name="An H.-J."/>
            <person name="Andrews-Pfannkoch C."/>
            <person name="Baldwin D."/>
            <person name="Ballew R.M."/>
            <person name="Basu A."/>
            <person name="Baxendale J."/>
            <person name="Bayraktaroglu L."/>
            <person name="Beasley E.M."/>
            <person name="Beeson K.Y."/>
            <person name="Benos P.V."/>
            <person name="Berman B.P."/>
            <person name="Bhandari D."/>
            <person name="Bolshakov S."/>
            <person name="Borkova D."/>
            <person name="Botchan M.R."/>
            <person name="Bouck J."/>
            <person name="Brokstein P."/>
            <person name="Brottier P."/>
            <person name="Burtis K.C."/>
            <person name="Busam D.A."/>
            <person name="Butler H."/>
            <person name="Cadieu E."/>
            <person name="Center A."/>
            <person name="Chandra I."/>
            <person name="Cherry J.M."/>
            <person name="Cawley S."/>
            <person name="Dahlke C."/>
            <person name="Davenport L.B."/>
            <person name="Davies P."/>
            <person name="de Pablos B."/>
            <person name="Delcher A."/>
            <person name="Deng Z."/>
            <person name="Mays A.D."/>
            <person name="Dew I."/>
            <person name="Dietz S.M."/>
            <person name="Dodson K."/>
            <person name="Doup L.E."/>
            <person name="Downes M."/>
            <person name="Dugan-Rocha S."/>
            <person name="Dunkov B.C."/>
            <person name="Dunn P."/>
            <person name="Durbin K.J."/>
            <person name="Evangelista C.C."/>
            <person name="Ferraz C."/>
            <person name="Ferriera S."/>
            <person name="Fleischmann W."/>
            <person name="Fosler C."/>
            <person name="Gabrielian A.E."/>
            <person name="Garg N.S."/>
            <person name="Gelbart W.M."/>
            <person name="Glasser K."/>
            <person name="Glodek A."/>
            <person name="Gong F."/>
            <person name="Gorrell J.H."/>
            <person name="Gu Z."/>
            <person name="Guan P."/>
            <person name="Harris M."/>
            <person name="Harris N.L."/>
            <person name="Harvey D.A."/>
            <person name="Heiman T.J."/>
            <person name="Hernandez J.R."/>
            <person name="Houck J."/>
            <person name="Hostin D."/>
            <person name="Houston K.A."/>
            <person name="Howland T.J."/>
            <person name="Wei M.-H."/>
            <person name="Ibegwam C."/>
            <person name="Jalali M."/>
            <person name="Kalush F."/>
            <person name="Karpen G.H."/>
            <person name="Ke Z."/>
            <person name="Kennison J.A."/>
            <person name="Ketchum K.A."/>
            <person name="Kimmel B.E."/>
            <person name="Kodira C.D."/>
            <person name="Kraft C.L."/>
            <person name="Kravitz S."/>
            <person name="Kulp D."/>
            <person name="Lai Z."/>
            <person name="Lasko P."/>
            <person name="Lei Y."/>
            <person name="Levitsky A.A."/>
            <person name="Li J.H."/>
            <person name="Li Z."/>
            <person name="Liang Y."/>
            <person name="Lin X."/>
            <person name="Liu X."/>
            <person name="Mattei B."/>
            <person name="McIntosh T.C."/>
            <person name="McLeod M.P."/>
            <person name="McPherson D."/>
            <person name="Merkulov G."/>
            <person name="Milshina N.V."/>
            <person name="Mobarry C."/>
            <person name="Morris J."/>
            <person name="Moshrefi A."/>
            <person name="Mount S.M."/>
            <person name="Moy M."/>
            <person name="Murphy B."/>
            <person name="Murphy L."/>
            <person name="Muzny D.M."/>
            <person name="Nelson D.L."/>
            <person name="Nelson D.R."/>
            <person name="Nelson K.A."/>
            <person name="Nixon K."/>
            <person name="Nusskern D.R."/>
            <person name="Pacleb J.M."/>
            <person name="Palazzolo M."/>
            <person name="Pittman G.S."/>
            <person name="Pan S."/>
            <person name="Pollard J."/>
            <person name="Puri V."/>
            <person name="Reese M.G."/>
            <person name="Reinert K."/>
            <person name="Remington K."/>
            <person name="Saunders R.D.C."/>
            <person name="Scheeler F."/>
            <person name="Shen H."/>
            <person name="Shue B.C."/>
            <person name="Siden-Kiamos I."/>
            <person name="Simpson M."/>
            <person name="Skupski M.P."/>
            <person name="Smith T.J."/>
            <person name="Spier E."/>
            <person name="Spradling A.C."/>
            <person name="Stapleton M."/>
            <person name="Strong R."/>
            <person name="Sun E."/>
            <person name="Svirskas R."/>
            <person name="Tector C."/>
            <person name="Turner R."/>
            <person name="Venter E."/>
            <person name="Wang A.H."/>
            <person name="Wang X."/>
            <person name="Wang Z.-Y."/>
            <person name="Wassarman D.A."/>
            <person name="Weinstock G.M."/>
            <person name="Weissenbach J."/>
            <person name="Williams S.M."/>
            <person name="Woodage T."/>
            <person name="Worley K.C."/>
            <person name="Wu D."/>
            <person name="Yang S."/>
            <person name="Yao Q.A."/>
            <person name="Ye J."/>
            <person name="Yeh R.-F."/>
            <person name="Zaveri J.S."/>
            <person name="Zhan M."/>
            <person name="Zhang G."/>
            <person name="Zhao Q."/>
            <person name="Zheng L."/>
            <person name="Zheng X.H."/>
            <person name="Zhong F.N."/>
            <person name="Zhong W."/>
            <person name="Zhou X."/>
            <person name="Zhu S.C."/>
            <person name="Zhu X."/>
            <person name="Smith H.O."/>
            <person name="Gibbs R.A."/>
            <person name="Myers E.W."/>
            <person name="Rubin G.M."/>
            <person name="Venter J.C."/>
        </authorList>
    </citation>
    <scope>NUCLEOTIDE SEQUENCE [LARGE SCALE GENOMIC DNA]</scope>
    <source>
        <strain>Berkeley</strain>
    </source>
</reference>
<reference key="2">
    <citation type="journal article" date="2002" name="Genome Biol.">
        <title>Annotation of the Drosophila melanogaster euchromatic genome: a systematic review.</title>
        <authorList>
            <person name="Misra S."/>
            <person name="Crosby M.A."/>
            <person name="Mungall C.J."/>
            <person name="Matthews B.B."/>
            <person name="Campbell K.S."/>
            <person name="Hradecky P."/>
            <person name="Huang Y."/>
            <person name="Kaminker J.S."/>
            <person name="Millburn G.H."/>
            <person name="Prochnik S.E."/>
            <person name="Smith C.D."/>
            <person name="Tupy J.L."/>
            <person name="Whitfield E.J."/>
            <person name="Bayraktaroglu L."/>
            <person name="Berman B.P."/>
            <person name="Bettencourt B.R."/>
            <person name="Celniker S.E."/>
            <person name="de Grey A.D.N.J."/>
            <person name="Drysdale R.A."/>
            <person name="Harris N.L."/>
            <person name="Richter J."/>
            <person name="Russo S."/>
            <person name="Schroeder A.J."/>
            <person name="Shu S.Q."/>
            <person name="Stapleton M."/>
            <person name="Yamada C."/>
            <person name="Ashburner M."/>
            <person name="Gelbart W.M."/>
            <person name="Rubin G.M."/>
            <person name="Lewis S.E."/>
        </authorList>
    </citation>
    <scope>GENOME REANNOTATION</scope>
    <source>
        <strain>Berkeley</strain>
    </source>
</reference>
<reference key="3">
    <citation type="journal article" date="2000" name="Science">
        <title>A Drosophila complementary DNA resource.</title>
        <authorList>
            <person name="Rubin G.M."/>
            <person name="Hong L."/>
            <person name="Brokstein P."/>
            <person name="Evans-Holm M."/>
            <person name="Frise E."/>
            <person name="Stapleton M."/>
            <person name="Harvey D.A."/>
        </authorList>
    </citation>
    <scope>NUCLEOTIDE SEQUENCE [LARGE SCALE MRNA]</scope>
    <source>
        <strain>Berkeley</strain>
        <tissue>Embryo</tissue>
    </source>
</reference>
<reference key="4">
    <citation type="journal article" date="2002" name="Genome Biol.">
        <title>A Drosophila full-length cDNA resource.</title>
        <authorList>
            <person name="Stapleton M."/>
            <person name="Carlson J.W."/>
            <person name="Brokstein P."/>
            <person name="Yu C."/>
            <person name="Champe M."/>
            <person name="George R.A."/>
            <person name="Guarin H."/>
            <person name="Kronmiller B."/>
            <person name="Pacleb J.M."/>
            <person name="Park S."/>
            <person name="Wan K.H."/>
            <person name="Rubin G.M."/>
            <person name="Celniker S.E."/>
        </authorList>
    </citation>
    <scope>NUCLEOTIDE SEQUENCE [LARGE SCALE MRNA]</scope>
    <source>
        <strain>Berkeley</strain>
        <tissue>Embryo</tissue>
    </source>
</reference>
<reference key="5">
    <citation type="journal article" date="2013" name="Cell Metab.">
        <title>Adenosine nucleotide biosynthesis and AMPK regulate adult life span and mediate the longevity benefit of caloric restriction in flies.</title>
        <authorList>
            <person name="Stenesen D."/>
            <person name="Suh J.M."/>
            <person name="Seo J."/>
            <person name="Yu K."/>
            <person name="Lee K.S."/>
            <person name="Kim J.S."/>
            <person name="Min K.J."/>
            <person name="Graff J.M."/>
        </authorList>
    </citation>
    <scope>FUNCTION</scope>
    <scope>DISRUPTION PHENOTYPE</scope>
</reference>
<organism>
    <name type="scientific">Drosophila melanogaster</name>
    <name type="common">Fruit fly</name>
    <dbReference type="NCBI Taxonomy" id="7227"/>
    <lineage>
        <taxon>Eukaryota</taxon>
        <taxon>Metazoa</taxon>
        <taxon>Ecdysozoa</taxon>
        <taxon>Arthropoda</taxon>
        <taxon>Hexapoda</taxon>
        <taxon>Insecta</taxon>
        <taxon>Pterygota</taxon>
        <taxon>Neoptera</taxon>
        <taxon>Endopterygota</taxon>
        <taxon>Diptera</taxon>
        <taxon>Brachycera</taxon>
        <taxon>Muscomorpha</taxon>
        <taxon>Ephydroidea</taxon>
        <taxon>Drosophilidae</taxon>
        <taxon>Drosophila</taxon>
        <taxon>Sophophora</taxon>
    </lineage>
</organism>